<evidence type="ECO:0000255" key="1"/>
<evidence type="ECO:0000269" key="2">
    <source>
    </source>
</evidence>
<evidence type="ECO:0000269" key="3">
    <source>
    </source>
</evidence>
<evidence type="ECO:0000303" key="4">
    <source>
    </source>
</evidence>
<evidence type="ECO:0000305" key="5"/>
<evidence type="ECO:0000305" key="6">
    <source>
    </source>
</evidence>
<keyword id="KW-0025">Alternative splicing</keyword>
<keyword id="KW-0150">Chloroplast</keyword>
<keyword id="KW-0472">Membrane</keyword>
<keyword id="KW-0934">Plastid</keyword>
<keyword id="KW-1185">Reference proteome</keyword>
<keyword id="KW-0809">Transit peptide</keyword>
<keyword id="KW-0812">Transmembrane</keyword>
<keyword id="KW-1133">Transmembrane helix</keyword>
<keyword id="KW-0813">Transport</keyword>
<reference key="1">
    <citation type="journal article" date="1999" name="Nature">
        <title>Sequence and analysis of chromosome 4 of the plant Arabidopsis thaliana.</title>
        <authorList>
            <person name="Mayer K.F.X."/>
            <person name="Schueller C."/>
            <person name="Wambutt R."/>
            <person name="Murphy G."/>
            <person name="Volckaert G."/>
            <person name="Pohl T."/>
            <person name="Duesterhoeft A."/>
            <person name="Stiekema W."/>
            <person name="Entian K.-D."/>
            <person name="Terryn N."/>
            <person name="Harris B."/>
            <person name="Ansorge W."/>
            <person name="Brandt P."/>
            <person name="Grivell L.A."/>
            <person name="Rieger M."/>
            <person name="Weichselgartner M."/>
            <person name="de Simone V."/>
            <person name="Obermaier B."/>
            <person name="Mache R."/>
            <person name="Mueller M."/>
            <person name="Kreis M."/>
            <person name="Delseny M."/>
            <person name="Puigdomenech P."/>
            <person name="Watson M."/>
            <person name="Schmidtheini T."/>
            <person name="Reichert B."/>
            <person name="Portetelle D."/>
            <person name="Perez-Alonso M."/>
            <person name="Boutry M."/>
            <person name="Bancroft I."/>
            <person name="Vos P."/>
            <person name="Hoheisel J."/>
            <person name="Zimmermann W."/>
            <person name="Wedler H."/>
            <person name="Ridley P."/>
            <person name="Langham S.-A."/>
            <person name="McCullagh B."/>
            <person name="Bilham L."/>
            <person name="Robben J."/>
            <person name="van der Schueren J."/>
            <person name="Grymonprez B."/>
            <person name="Chuang Y.-J."/>
            <person name="Vandenbussche F."/>
            <person name="Braeken M."/>
            <person name="Weltjens I."/>
            <person name="Voet M."/>
            <person name="Bastiaens I."/>
            <person name="Aert R."/>
            <person name="Defoor E."/>
            <person name="Weitzenegger T."/>
            <person name="Bothe G."/>
            <person name="Ramsperger U."/>
            <person name="Hilbert H."/>
            <person name="Braun M."/>
            <person name="Holzer E."/>
            <person name="Brandt A."/>
            <person name="Peters S."/>
            <person name="van Staveren M."/>
            <person name="Dirkse W."/>
            <person name="Mooijman P."/>
            <person name="Klein Lankhorst R."/>
            <person name="Rose M."/>
            <person name="Hauf J."/>
            <person name="Koetter P."/>
            <person name="Berneiser S."/>
            <person name="Hempel S."/>
            <person name="Feldpausch M."/>
            <person name="Lamberth S."/>
            <person name="Van den Daele H."/>
            <person name="De Keyser A."/>
            <person name="Buysshaert C."/>
            <person name="Gielen J."/>
            <person name="Villarroel R."/>
            <person name="De Clercq R."/>
            <person name="van Montagu M."/>
            <person name="Rogers J."/>
            <person name="Cronin A."/>
            <person name="Quail M.A."/>
            <person name="Bray-Allen S."/>
            <person name="Clark L."/>
            <person name="Doggett J."/>
            <person name="Hall S."/>
            <person name="Kay M."/>
            <person name="Lennard N."/>
            <person name="McLay K."/>
            <person name="Mayes R."/>
            <person name="Pettett A."/>
            <person name="Rajandream M.A."/>
            <person name="Lyne M."/>
            <person name="Benes V."/>
            <person name="Rechmann S."/>
            <person name="Borkova D."/>
            <person name="Bloecker H."/>
            <person name="Scharfe M."/>
            <person name="Grimm M."/>
            <person name="Loehnert T.-H."/>
            <person name="Dose S."/>
            <person name="de Haan M."/>
            <person name="Maarse A.C."/>
            <person name="Schaefer M."/>
            <person name="Mueller-Auer S."/>
            <person name="Gabel C."/>
            <person name="Fuchs M."/>
            <person name="Fartmann B."/>
            <person name="Granderath K."/>
            <person name="Dauner D."/>
            <person name="Herzl A."/>
            <person name="Neumann S."/>
            <person name="Argiriou A."/>
            <person name="Vitale D."/>
            <person name="Liguori R."/>
            <person name="Piravandi E."/>
            <person name="Massenet O."/>
            <person name="Quigley F."/>
            <person name="Clabauld G."/>
            <person name="Muendlein A."/>
            <person name="Felber R."/>
            <person name="Schnabl S."/>
            <person name="Hiller R."/>
            <person name="Schmidt W."/>
            <person name="Lecharny A."/>
            <person name="Aubourg S."/>
            <person name="Chefdor F."/>
            <person name="Cooke R."/>
            <person name="Berger C."/>
            <person name="Monfort A."/>
            <person name="Casacuberta E."/>
            <person name="Gibbons T."/>
            <person name="Weber N."/>
            <person name="Vandenbol M."/>
            <person name="Bargues M."/>
            <person name="Terol J."/>
            <person name="Torres A."/>
            <person name="Perez-Perez A."/>
            <person name="Purnelle B."/>
            <person name="Bent E."/>
            <person name="Johnson S."/>
            <person name="Tacon D."/>
            <person name="Jesse T."/>
            <person name="Heijnen L."/>
            <person name="Schwarz S."/>
            <person name="Scholler P."/>
            <person name="Heber S."/>
            <person name="Francs P."/>
            <person name="Bielke C."/>
            <person name="Frishman D."/>
            <person name="Haase D."/>
            <person name="Lemcke K."/>
            <person name="Mewes H.-W."/>
            <person name="Stocker S."/>
            <person name="Zaccaria P."/>
            <person name="Bevan M."/>
            <person name="Wilson R.K."/>
            <person name="de la Bastide M."/>
            <person name="Habermann K."/>
            <person name="Parnell L."/>
            <person name="Dedhia N."/>
            <person name="Gnoj L."/>
            <person name="Schutz K."/>
            <person name="Huang E."/>
            <person name="Spiegel L."/>
            <person name="Sekhon M."/>
            <person name="Murray J."/>
            <person name="Sheet P."/>
            <person name="Cordes M."/>
            <person name="Abu-Threideh J."/>
            <person name="Stoneking T."/>
            <person name="Kalicki J."/>
            <person name="Graves T."/>
            <person name="Harmon G."/>
            <person name="Edwards J."/>
            <person name="Latreille P."/>
            <person name="Courtney L."/>
            <person name="Cloud J."/>
            <person name="Abbott A."/>
            <person name="Scott K."/>
            <person name="Johnson D."/>
            <person name="Minx P."/>
            <person name="Bentley D."/>
            <person name="Fulton B."/>
            <person name="Miller N."/>
            <person name="Greco T."/>
            <person name="Kemp K."/>
            <person name="Kramer J."/>
            <person name="Fulton L."/>
            <person name="Mardis E."/>
            <person name="Dante M."/>
            <person name="Pepin K."/>
            <person name="Hillier L.W."/>
            <person name="Nelson J."/>
            <person name="Spieth J."/>
            <person name="Ryan E."/>
            <person name="Andrews S."/>
            <person name="Geisel C."/>
            <person name="Layman D."/>
            <person name="Du H."/>
            <person name="Ali J."/>
            <person name="Berghoff A."/>
            <person name="Jones K."/>
            <person name="Drone K."/>
            <person name="Cotton M."/>
            <person name="Joshu C."/>
            <person name="Antonoiu B."/>
            <person name="Zidanic M."/>
            <person name="Strong C."/>
            <person name="Sun H."/>
            <person name="Lamar B."/>
            <person name="Yordan C."/>
            <person name="Ma P."/>
            <person name="Zhong J."/>
            <person name="Preston R."/>
            <person name="Vil D."/>
            <person name="Shekher M."/>
            <person name="Matero A."/>
            <person name="Shah R."/>
            <person name="Swaby I.K."/>
            <person name="O'Shaughnessy A."/>
            <person name="Rodriguez M."/>
            <person name="Hoffman J."/>
            <person name="Till S."/>
            <person name="Granat S."/>
            <person name="Shohdy N."/>
            <person name="Hasegawa A."/>
            <person name="Hameed A."/>
            <person name="Lodhi M."/>
            <person name="Johnson A."/>
            <person name="Chen E."/>
            <person name="Marra M.A."/>
            <person name="Martienssen R."/>
            <person name="McCombie W.R."/>
        </authorList>
    </citation>
    <scope>NUCLEOTIDE SEQUENCE [LARGE SCALE GENOMIC DNA]</scope>
    <source>
        <strain>cv. Columbia</strain>
    </source>
</reference>
<reference key="2">
    <citation type="journal article" date="2017" name="Plant J.">
        <title>Araport11: a complete reannotation of the Arabidopsis thaliana reference genome.</title>
        <authorList>
            <person name="Cheng C.Y."/>
            <person name="Krishnakumar V."/>
            <person name="Chan A.P."/>
            <person name="Thibaud-Nissen F."/>
            <person name="Schobel S."/>
            <person name="Town C.D."/>
        </authorList>
    </citation>
    <scope>GENOME REANNOTATION</scope>
    <source>
        <strain>cv. Columbia</strain>
    </source>
</reference>
<reference key="3">
    <citation type="journal article" date="2003" name="Science">
        <title>Empirical analysis of transcriptional activity in the Arabidopsis genome.</title>
        <authorList>
            <person name="Yamada K."/>
            <person name="Lim J."/>
            <person name="Dale J.M."/>
            <person name="Chen H."/>
            <person name="Shinn P."/>
            <person name="Palm C.J."/>
            <person name="Southwick A.M."/>
            <person name="Wu H.C."/>
            <person name="Kim C.J."/>
            <person name="Nguyen M."/>
            <person name="Pham P.K."/>
            <person name="Cheuk R.F."/>
            <person name="Karlin-Newmann G."/>
            <person name="Liu S.X."/>
            <person name="Lam B."/>
            <person name="Sakano H."/>
            <person name="Wu T."/>
            <person name="Yu G."/>
            <person name="Miranda M."/>
            <person name="Quach H.L."/>
            <person name="Tripp M."/>
            <person name="Chang C.H."/>
            <person name="Lee J.M."/>
            <person name="Toriumi M.J."/>
            <person name="Chan M.M."/>
            <person name="Tang C.C."/>
            <person name="Onodera C.S."/>
            <person name="Deng J.M."/>
            <person name="Akiyama K."/>
            <person name="Ansari Y."/>
            <person name="Arakawa T."/>
            <person name="Banh J."/>
            <person name="Banno F."/>
            <person name="Bowser L."/>
            <person name="Brooks S.Y."/>
            <person name="Carninci P."/>
            <person name="Chao Q."/>
            <person name="Choy N."/>
            <person name="Enju A."/>
            <person name="Goldsmith A.D."/>
            <person name="Gurjal M."/>
            <person name="Hansen N.F."/>
            <person name="Hayashizaki Y."/>
            <person name="Johnson-Hopson C."/>
            <person name="Hsuan V.W."/>
            <person name="Iida K."/>
            <person name="Karnes M."/>
            <person name="Khan S."/>
            <person name="Koesema E."/>
            <person name="Ishida J."/>
            <person name="Jiang P.X."/>
            <person name="Jones T."/>
            <person name="Kawai J."/>
            <person name="Kamiya A."/>
            <person name="Meyers C."/>
            <person name="Nakajima M."/>
            <person name="Narusaka M."/>
            <person name="Seki M."/>
            <person name="Sakurai T."/>
            <person name="Satou M."/>
            <person name="Tamse R."/>
            <person name="Vaysberg M."/>
            <person name="Wallender E.K."/>
            <person name="Wong C."/>
            <person name="Yamamura Y."/>
            <person name="Yuan S."/>
            <person name="Shinozaki K."/>
            <person name="Davis R.W."/>
            <person name="Theologis A."/>
            <person name="Ecker J.R."/>
        </authorList>
    </citation>
    <scope>NUCLEOTIDE SEQUENCE [LARGE SCALE MRNA] (ISOFORM 1)</scope>
    <source>
        <strain>cv. Columbia</strain>
    </source>
</reference>
<reference key="4">
    <citation type="journal article" date="2004" name="Genome Res.">
        <title>Whole genome sequence comparisons and 'full-length' cDNA sequences: a combined approach to evaluate and improve Arabidopsis genome annotation.</title>
        <authorList>
            <person name="Castelli V."/>
            <person name="Aury J.-M."/>
            <person name="Jaillon O."/>
            <person name="Wincker P."/>
            <person name="Clepet C."/>
            <person name="Menard M."/>
            <person name="Cruaud C."/>
            <person name="Quetier F."/>
            <person name="Scarpelli C."/>
            <person name="Schaechter V."/>
            <person name="Temple G."/>
            <person name="Caboche M."/>
            <person name="Weissenbach J."/>
            <person name="Salanoubat M."/>
        </authorList>
    </citation>
    <scope>NUCLEOTIDE SEQUENCE [LARGE SCALE MRNA] (ISOFORM 2)</scope>
    <source>
        <strain>cv. Columbia</strain>
    </source>
</reference>
<reference key="5">
    <citation type="journal article" date="2009" name="Plant Cell">
        <title>The plastidic bile acid transporter 5 is required for the biosynthesis of methionine-derived glucosinolates in Arabidopsis thaliana.</title>
        <authorList>
            <person name="Gigolashvili T."/>
            <person name="Yatusevich R."/>
            <person name="Rollwitz I."/>
            <person name="Humphry M."/>
            <person name="Gershenzon J."/>
            <person name="Fluegge U.-I."/>
        </authorList>
    </citation>
    <scope>FUNCTION</scope>
    <scope>SUBCELLULAR LOCATION</scope>
    <scope>TISSUE SPECIFICITY</scope>
    <scope>INDUCTION</scope>
    <scope>DISRUPTION PHENOTYPE</scope>
</reference>
<reference key="6">
    <citation type="journal article" date="2009" name="Plant Cell Physiol.">
        <title>Arabidopsis bile acid:sodium symporter family protein 5 is involved in methionine-derived glucosinolate biosynthesis.</title>
        <authorList>
            <person name="Sawada Y."/>
            <person name="Toyooka K."/>
            <person name="Kuwahara A."/>
            <person name="Sakata A."/>
            <person name="Nagano M."/>
            <person name="Saito K."/>
            <person name="Hirai M.Y."/>
        </authorList>
    </citation>
    <scope>FUNCTION</scope>
    <scope>DISRUPTION PHENOTYPE</scope>
</reference>
<gene>
    <name type="primary">BASS5</name>
    <name type="synonym">BAT5</name>
    <name type="ordered locus">At4g12030</name>
    <name type="ORF">F16J13.100</name>
</gene>
<protein>
    <recommendedName>
        <fullName>Probable sodium/metabolite cotransporter BASS5, chloroplastic</fullName>
    </recommendedName>
    <alternativeName>
        <fullName>Bile acid transporter 5</fullName>
    </alternativeName>
    <alternativeName>
        <fullName>Bile acid-sodium symporter family protein 5</fullName>
    </alternativeName>
</protein>
<dbReference type="EMBL" id="AL049638">
    <property type="protein sequence ID" value="CAB40944.1"/>
    <property type="status" value="ALT_SEQ"/>
    <property type="molecule type" value="Genomic_DNA"/>
</dbReference>
<dbReference type="EMBL" id="AL161533">
    <property type="protein sequence ID" value="CAB78246.1"/>
    <property type="status" value="ALT_SEQ"/>
    <property type="molecule type" value="Genomic_DNA"/>
</dbReference>
<dbReference type="EMBL" id="CP002687">
    <property type="protein sequence ID" value="AEE83087.1"/>
    <property type="molecule type" value="Genomic_DNA"/>
</dbReference>
<dbReference type="EMBL" id="CP002687">
    <property type="protein sequence ID" value="AEE83088.1"/>
    <property type="molecule type" value="Genomic_DNA"/>
</dbReference>
<dbReference type="EMBL" id="CP002687">
    <property type="protein sequence ID" value="ANM66697.1"/>
    <property type="molecule type" value="Genomic_DNA"/>
</dbReference>
<dbReference type="EMBL" id="CP002687">
    <property type="protein sequence ID" value="ANM66698.1"/>
    <property type="molecule type" value="Genomic_DNA"/>
</dbReference>
<dbReference type="EMBL" id="AY050449">
    <property type="protein sequence ID" value="AAK91464.1"/>
    <property type="status" value="ALT_FRAME"/>
    <property type="molecule type" value="mRNA"/>
</dbReference>
<dbReference type="EMBL" id="AY097358">
    <property type="protein sequence ID" value="AAM19874.1"/>
    <property type="molecule type" value="mRNA"/>
</dbReference>
<dbReference type="EMBL" id="BX828262">
    <property type="status" value="NOT_ANNOTATED_CDS"/>
    <property type="molecule type" value="mRNA"/>
</dbReference>
<dbReference type="PIR" id="T06610">
    <property type="entry name" value="T06610"/>
</dbReference>
<dbReference type="RefSeq" id="NP_001319909.1">
    <molecule id="F4JPW1-2"/>
    <property type="nucleotide sequence ID" value="NM_001340768.1"/>
</dbReference>
<dbReference type="RefSeq" id="NP_001328579.1">
    <molecule id="F4JPW1-2"/>
    <property type="nucleotide sequence ID" value="NM_001340769.1"/>
</dbReference>
<dbReference type="RefSeq" id="NP_567385.1">
    <molecule id="F4JPW1-2"/>
    <property type="nucleotide sequence ID" value="NM_117273.3"/>
</dbReference>
<dbReference type="RefSeq" id="NP_974538.1">
    <molecule id="F4JPW1-1"/>
    <property type="nucleotide sequence ID" value="NM_202809.3"/>
</dbReference>
<dbReference type="SMR" id="F4JPW1"/>
<dbReference type="BioGRID" id="12109">
    <property type="interactions" value="2"/>
</dbReference>
<dbReference type="FunCoup" id="F4JPW1">
    <property type="interactions" value="120"/>
</dbReference>
<dbReference type="IntAct" id="F4JPW1">
    <property type="interactions" value="2"/>
</dbReference>
<dbReference type="STRING" id="3702.F4JPW1"/>
<dbReference type="PaxDb" id="3702-AT4G12030.2"/>
<dbReference type="ProteomicsDB" id="240746">
    <molecule id="F4JPW1-1"/>
</dbReference>
<dbReference type="EnsemblPlants" id="AT4G12030.1">
    <molecule id="F4JPW1-2"/>
    <property type="protein sequence ID" value="AT4G12030.1"/>
    <property type="gene ID" value="AT4G12030"/>
</dbReference>
<dbReference type="EnsemblPlants" id="AT4G12030.2">
    <molecule id="F4JPW1-1"/>
    <property type="protein sequence ID" value="AT4G12030.2"/>
    <property type="gene ID" value="AT4G12030"/>
</dbReference>
<dbReference type="EnsemblPlants" id="AT4G12030.3">
    <molecule id="F4JPW1-2"/>
    <property type="protein sequence ID" value="AT4G12030.3"/>
    <property type="gene ID" value="AT4G12030"/>
</dbReference>
<dbReference type="EnsemblPlants" id="AT4G12030.5">
    <molecule id="F4JPW1-2"/>
    <property type="protein sequence ID" value="AT4G12030.5"/>
    <property type="gene ID" value="AT4G12030"/>
</dbReference>
<dbReference type="GeneID" id="826811"/>
<dbReference type="Gramene" id="AT4G12030.1">
    <molecule id="F4JPW1-2"/>
    <property type="protein sequence ID" value="AT4G12030.1"/>
    <property type="gene ID" value="AT4G12030"/>
</dbReference>
<dbReference type="Gramene" id="AT4G12030.2">
    <molecule id="F4JPW1-1"/>
    <property type="protein sequence ID" value="AT4G12030.2"/>
    <property type="gene ID" value="AT4G12030"/>
</dbReference>
<dbReference type="Gramene" id="AT4G12030.3">
    <molecule id="F4JPW1-2"/>
    <property type="protein sequence ID" value="AT4G12030.3"/>
    <property type="gene ID" value="AT4G12030"/>
</dbReference>
<dbReference type="Gramene" id="AT4G12030.5">
    <molecule id="F4JPW1-2"/>
    <property type="protein sequence ID" value="AT4G12030.5"/>
    <property type="gene ID" value="AT4G12030"/>
</dbReference>
<dbReference type="KEGG" id="ath:AT4G12030"/>
<dbReference type="Araport" id="AT4G12030"/>
<dbReference type="TAIR" id="AT4G12030">
    <property type="gene designation" value="BAT5"/>
</dbReference>
<dbReference type="eggNOG" id="KOG2718">
    <property type="taxonomic scope" value="Eukaryota"/>
</dbReference>
<dbReference type="HOGENOM" id="CLU_034788_3_1_1"/>
<dbReference type="InParanoid" id="F4JPW1"/>
<dbReference type="PhylomeDB" id="F4JPW1"/>
<dbReference type="PRO" id="PR:F4JPW1"/>
<dbReference type="Proteomes" id="UP000006548">
    <property type="component" value="Chromosome 4"/>
</dbReference>
<dbReference type="ExpressionAtlas" id="F4JPW1">
    <property type="expression patterns" value="baseline and differential"/>
</dbReference>
<dbReference type="GO" id="GO:0009941">
    <property type="term" value="C:chloroplast envelope"/>
    <property type="evidence" value="ECO:0000315"/>
    <property type="project" value="UniProtKB"/>
</dbReference>
<dbReference type="GO" id="GO:0016020">
    <property type="term" value="C:membrane"/>
    <property type="evidence" value="ECO:0007669"/>
    <property type="project" value="UniProtKB-SubCell"/>
</dbReference>
<dbReference type="GO" id="GO:0009536">
    <property type="term" value="C:plastid"/>
    <property type="evidence" value="ECO:0000314"/>
    <property type="project" value="TAIR"/>
</dbReference>
<dbReference type="GO" id="GO:0008028">
    <property type="term" value="F:monocarboxylic acid transmembrane transporter activity"/>
    <property type="evidence" value="ECO:0000315"/>
    <property type="project" value="TAIR"/>
</dbReference>
<dbReference type="GO" id="GO:0019761">
    <property type="term" value="P:glucosinolate biosynthetic process"/>
    <property type="evidence" value="ECO:0000315"/>
    <property type="project" value="TAIR"/>
</dbReference>
<dbReference type="GO" id="GO:0033506">
    <property type="term" value="P:glucosinolate biosynthetic process from homomethionine"/>
    <property type="evidence" value="ECO:0000315"/>
    <property type="project" value="UniProtKB"/>
</dbReference>
<dbReference type="GO" id="GO:0009753">
    <property type="term" value="P:response to jasmonic acid"/>
    <property type="evidence" value="ECO:0000270"/>
    <property type="project" value="TAIR"/>
</dbReference>
<dbReference type="GO" id="GO:0009611">
    <property type="term" value="P:response to wounding"/>
    <property type="evidence" value="ECO:0000314"/>
    <property type="project" value="TAIR"/>
</dbReference>
<dbReference type="FunFam" id="1.20.1530.20:FF:000018">
    <property type="entry name" value="Probable sodium/metabolite cotransporter BASS1, chloroplastic"/>
    <property type="match status" value="1"/>
</dbReference>
<dbReference type="Gene3D" id="1.20.1530.20">
    <property type="match status" value="1"/>
</dbReference>
<dbReference type="InterPro" id="IPR002657">
    <property type="entry name" value="BilAc:Na_symport/Acr3"/>
</dbReference>
<dbReference type="InterPro" id="IPR004710">
    <property type="entry name" value="Bilac:Na_transpt"/>
</dbReference>
<dbReference type="InterPro" id="IPR038770">
    <property type="entry name" value="Na+/solute_symporter_sf"/>
</dbReference>
<dbReference type="PANTHER" id="PTHR10361">
    <property type="entry name" value="SODIUM-BILE ACID COTRANSPORTER"/>
    <property type="match status" value="1"/>
</dbReference>
<dbReference type="PANTHER" id="PTHR10361:SF61">
    <property type="entry name" value="SODIUM_METABOLITE COTRANSPORTER BASS5, CHLOROPLASTIC-RELATED"/>
    <property type="match status" value="1"/>
</dbReference>
<dbReference type="Pfam" id="PF01758">
    <property type="entry name" value="SBF"/>
    <property type="match status" value="1"/>
</dbReference>
<accession>F4JPW1</accession>
<accession>Q94A17</accession>
<accession>Q9SZ68</accession>
<comment type="function">
    <text evidence="2 3">Plastidic transporter involved in the biosynthesis of aliphatic glucosinolates by translocating the biosynthetic intermediates of Met-derived glucosinolates across chloroplast membranes. Transports short chain (C2) alpha-keto acids, such as 4-methylsulfanyl-2-oxobutanoic acid, from the cytosol to the chloroplast where they are subjected to chain elongation cycles. Also functions in the transport of chain-elongated (C3 to C8) Met derivatives from the chloroplast to the cytosol. Does not seem to be involved in the transport of indole-derived glucosinolates.</text>
</comment>
<comment type="subcellular location">
    <subcellularLocation>
        <location evidence="6">Membrane</location>
        <topology evidence="6">Multi-pass membrane protein</topology>
    </subcellularLocation>
    <subcellularLocation>
        <location evidence="6">Plastid</location>
        <location evidence="6">Chloroplast envelope</location>
    </subcellularLocation>
</comment>
<comment type="alternative products">
    <event type="alternative splicing"/>
    <isoform>
        <id>F4JPW1-1</id>
        <name>1</name>
        <sequence type="displayed"/>
    </isoform>
    <isoform>
        <id>F4JPW1-2</id>
        <name>2</name>
        <sequence type="described" ref="VSP_044057"/>
    </isoform>
</comment>
<comment type="tissue specificity">
    <text evidence="2">Widely expressed.</text>
</comment>
<comment type="induction">
    <text evidence="2">By wounding and methyl jasmonate (MeJa). Down-regulated by salicylic acid (SA).</text>
</comment>
<comment type="disruption phenotype">
    <text evidence="2 3">No visible phenotype under normal growth conditions, but plants contain reduced levels of aliphatic glucosinolates.</text>
</comment>
<comment type="similarity">
    <text evidence="5">Belongs to the bile acid:sodium symporter (BASS) (TC 2.A.28) family.</text>
</comment>
<comment type="sequence caution" evidence="5">
    <conflict type="frameshift">
        <sequence resource="EMBL-CDS" id="AAK91464"/>
    </conflict>
</comment>
<comment type="sequence caution" evidence="5">
    <conflict type="erroneous gene model prediction">
        <sequence resource="EMBL-CDS" id="CAB40944"/>
    </conflict>
</comment>
<comment type="sequence caution" evidence="5">
    <conflict type="erroneous gene model prediction">
        <sequence resource="EMBL-CDS" id="CAB78246"/>
    </conflict>
</comment>
<sequence>MGVISPTETLFLKSQHRLLQPRNYSYALAFHSTRRVANFPRNSFSSLGSCSVDFPLRSNPISQNSKSIHPWRRYVSESDSNELYHKKVSSIMETLKQAYSFIPHGILLSTILALVYPPSFTWFKPRYFVPGLGFMMFAVGINSNERDFLEALKRPDAIFAGYIGQYLIKPLLGYIFGVIAVSLFNLPTSIGAGIMLVSCVSGAQLSNYTTFLTDPSLAALSIVMTSISTATAVLVTPMLSLLLIGKKLPVDVFGMISSILQVVITPIAAGLLLNRLFPRLSNAIKPFLPALTVIDMSCCIGAPLALNIDSILSPFGATILFLVITFHLLAFVAGYFFTGFFFSKAPDVKALQRTISYETGMQSSLLALALATKFFQDPLVGVPPAISTVVMSLMGVSLVTIWKNRKE</sequence>
<proteinExistence type="evidence at transcript level"/>
<name>BASS5_ARATH</name>
<organism>
    <name type="scientific">Arabidopsis thaliana</name>
    <name type="common">Mouse-ear cress</name>
    <dbReference type="NCBI Taxonomy" id="3702"/>
    <lineage>
        <taxon>Eukaryota</taxon>
        <taxon>Viridiplantae</taxon>
        <taxon>Streptophyta</taxon>
        <taxon>Embryophyta</taxon>
        <taxon>Tracheophyta</taxon>
        <taxon>Spermatophyta</taxon>
        <taxon>Magnoliopsida</taxon>
        <taxon>eudicotyledons</taxon>
        <taxon>Gunneridae</taxon>
        <taxon>Pentapetalae</taxon>
        <taxon>rosids</taxon>
        <taxon>malvids</taxon>
        <taxon>Brassicales</taxon>
        <taxon>Brassicaceae</taxon>
        <taxon>Camelineae</taxon>
        <taxon>Arabidopsis</taxon>
    </lineage>
</organism>
<feature type="transit peptide" description="Chloroplast" evidence="1">
    <location>
        <begin position="1"/>
        <end position="57"/>
    </location>
</feature>
<feature type="chain" id="PRO_0000418606" description="Probable sodium/metabolite cotransporter BASS5, chloroplastic">
    <location>
        <begin position="58"/>
        <end position="407"/>
    </location>
</feature>
<feature type="transmembrane region" description="Helical" evidence="1">
    <location>
        <begin position="101"/>
        <end position="121"/>
    </location>
</feature>
<feature type="transmembrane region" description="Helical" evidence="1">
    <location>
        <begin position="122"/>
        <end position="142"/>
    </location>
</feature>
<feature type="transmembrane region" description="Helical" evidence="1">
    <location>
        <begin position="162"/>
        <end position="184"/>
    </location>
</feature>
<feature type="transmembrane region" description="Helical" evidence="1">
    <location>
        <begin position="191"/>
        <end position="213"/>
    </location>
</feature>
<feature type="transmembrane region" description="Helical" evidence="1">
    <location>
        <begin position="222"/>
        <end position="242"/>
    </location>
</feature>
<feature type="transmembrane region" description="Helical" evidence="1">
    <location>
        <begin position="252"/>
        <end position="272"/>
    </location>
</feature>
<feature type="transmembrane region" description="Helical" evidence="1">
    <location>
        <begin position="286"/>
        <end position="306"/>
    </location>
</feature>
<feature type="transmembrane region" description="Helical" evidence="1">
    <location>
        <begin position="317"/>
        <end position="337"/>
    </location>
</feature>
<feature type="transmembrane region" description="Helical" evidence="1">
    <location>
        <begin position="379"/>
        <end position="399"/>
    </location>
</feature>
<feature type="splice variant" id="VSP_044057" description="In isoform 2." evidence="4">
    <location>
        <begin position="1"/>
        <end position="134"/>
    </location>
</feature>
<feature type="sequence conflict" description="In Ref. 4; BX828262." evidence="5" ref="4">
    <original>K</original>
    <variation>N</variation>
    <location>
        <position position="153"/>
    </location>
</feature>